<name>CCA_LEGPL</name>
<reference key="1">
    <citation type="journal article" date="2004" name="Nat. Genet.">
        <title>Evidence in the Legionella pneumophila genome for exploitation of host cell functions and high genome plasticity.</title>
        <authorList>
            <person name="Cazalet C."/>
            <person name="Rusniok C."/>
            <person name="Brueggemann H."/>
            <person name="Zidane N."/>
            <person name="Magnier A."/>
            <person name="Ma L."/>
            <person name="Tichit M."/>
            <person name="Jarraud S."/>
            <person name="Bouchier C."/>
            <person name="Vandenesch F."/>
            <person name="Kunst F."/>
            <person name="Etienne J."/>
            <person name="Glaser P."/>
            <person name="Buchrieser C."/>
        </authorList>
    </citation>
    <scope>NUCLEOTIDE SEQUENCE [LARGE SCALE GENOMIC DNA]</scope>
    <source>
        <strain>Lens</strain>
    </source>
</reference>
<accession>Q5WT58</accession>
<evidence type="ECO:0000255" key="1">
    <source>
        <dbReference type="HAMAP-Rule" id="MF_01261"/>
    </source>
</evidence>
<organism>
    <name type="scientific">Legionella pneumophila (strain Lens)</name>
    <dbReference type="NCBI Taxonomy" id="297245"/>
    <lineage>
        <taxon>Bacteria</taxon>
        <taxon>Pseudomonadati</taxon>
        <taxon>Pseudomonadota</taxon>
        <taxon>Gammaproteobacteria</taxon>
        <taxon>Legionellales</taxon>
        <taxon>Legionellaceae</taxon>
        <taxon>Legionella</taxon>
    </lineage>
</organism>
<keyword id="KW-0067">ATP-binding</keyword>
<keyword id="KW-0378">Hydrolase</keyword>
<keyword id="KW-0460">Magnesium</keyword>
<keyword id="KW-0479">Metal-binding</keyword>
<keyword id="KW-0511">Multifunctional enzyme</keyword>
<keyword id="KW-0533">Nickel</keyword>
<keyword id="KW-0547">Nucleotide-binding</keyword>
<keyword id="KW-0548">Nucleotidyltransferase</keyword>
<keyword id="KW-0692">RNA repair</keyword>
<keyword id="KW-0694">RNA-binding</keyword>
<keyword id="KW-0808">Transferase</keyword>
<keyword id="KW-0819">tRNA processing</keyword>
<comment type="function">
    <text evidence="1">Catalyzes the addition and repair of the essential 3'-terminal CCA sequence in tRNAs without using a nucleic acid template. Adds these three nucleotides in the order of C, C, and A to the tRNA nucleotide-73, using CTP and ATP as substrates and producing inorganic pyrophosphate. tRNA 3'-terminal CCA addition is required both for tRNA processing and repair. Also involved in tRNA surveillance by mediating tandem CCA addition to generate a CCACCA at the 3' terminus of unstable tRNAs. While stable tRNAs receive only 3'-terminal CCA, unstable tRNAs are marked with CCACCA and rapidly degraded.</text>
</comment>
<comment type="catalytic activity">
    <reaction evidence="1">
        <text>a tRNA precursor + 2 CTP + ATP = a tRNA with a 3' CCA end + 3 diphosphate</text>
        <dbReference type="Rhea" id="RHEA:14433"/>
        <dbReference type="Rhea" id="RHEA-COMP:10465"/>
        <dbReference type="Rhea" id="RHEA-COMP:10468"/>
        <dbReference type="ChEBI" id="CHEBI:30616"/>
        <dbReference type="ChEBI" id="CHEBI:33019"/>
        <dbReference type="ChEBI" id="CHEBI:37563"/>
        <dbReference type="ChEBI" id="CHEBI:74896"/>
        <dbReference type="ChEBI" id="CHEBI:83071"/>
        <dbReference type="EC" id="2.7.7.72"/>
    </reaction>
</comment>
<comment type="catalytic activity">
    <reaction evidence="1">
        <text>a tRNA with a 3' CCA end + 2 CTP + ATP = a tRNA with a 3' CCACCA end + 3 diphosphate</text>
        <dbReference type="Rhea" id="RHEA:76235"/>
        <dbReference type="Rhea" id="RHEA-COMP:10468"/>
        <dbReference type="Rhea" id="RHEA-COMP:18655"/>
        <dbReference type="ChEBI" id="CHEBI:30616"/>
        <dbReference type="ChEBI" id="CHEBI:33019"/>
        <dbReference type="ChEBI" id="CHEBI:37563"/>
        <dbReference type="ChEBI" id="CHEBI:83071"/>
        <dbReference type="ChEBI" id="CHEBI:195187"/>
    </reaction>
    <physiologicalReaction direction="left-to-right" evidence="1">
        <dbReference type="Rhea" id="RHEA:76236"/>
    </physiologicalReaction>
</comment>
<comment type="cofactor">
    <cofactor evidence="1">
        <name>Mg(2+)</name>
        <dbReference type="ChEBI" id="CHEBI:18420"/>
    </cofactor>
    <text evidence="1">Magnesium is required for nucleotidyltransferase activity.</text>
</comment>
<comment type="cofactor">
    <cofactor evidence="1">
        <name>Ni(2+)</name>
        <dbReference type="ChEBI" id="CHEBI:49786"/>
    </cofactor>
    <text evidence="1">Nickel for phosphatase activity.</text>
</comment>
<comment type="subunit">
    <text evidence="1">Monomer. Can also form homodimers and oligomers.</text>
</comment>
<comment type="domain">
    <text evidence="1">Comprises two domains: an N-terminal domain containing the nucleotidyltransferase activity and a C-terminal HD domain associated with both phosphodiesterase and phosphatase activities.</text>
</comment>
<comment type="miscellaneous">
    <text evidence="1">A single active site specifically recognizes both ATP and CTP and is responsible for their addition.</text>
</comment>
<comment type="similarity">
    <text evidence="1">Belongs to the tRNA nucleotidyltransferase/poly(A) polymerase family. Bacterial CCA-adding enzyme type 1 subfamily.</text>
</comment>
<protein>
    <recommendedName>
        <fullName evidence="1">Multifunctional CCA protein</fullName>
    </recommendedName>
    <domain>
        <recommendedName>
            <fullName evidence="1">CCA-adding enzyme</fullName>
            <ecNumber evidence="1">2.7.7.72</ecNumber>
        </recommendedName>
        <alternativeName>
            <fullName evidence="1">CCA tRNA nucleotidyltransferase</fullName>
        </alternativeName>
        <alternativeName>
            <fullName evidence="1">tRNA CCA-pyrophosphorylase</fullName>
        </alternativeName>
        <alternativeName>
            <fullName evidence="1">tRNA adenylyl-/cytidylyl-transferase</fullName>
        </alternativeName>
        <alternativeName>
            <fullName evidence="1">tRNA nucleotidyltransferase</fullName>
        </alternativeName>
        <alternativeName>
            <fullName evidence="1">tRNA-NT</fullName>
        </alternativeName>
    </domain>
    <domain>
        <recommendedName>
            <fullName evidence="1">2'-nucleotidase</fullName>
            <ecNumber evidence="1">3.1.3.-</ecNumber>
        </recommendedName>
    </domain>
    <domain>
        <recommendedName>
            <fullName evidence="1">2',3'-cyclic phosphodiesterase</fullName>
            <ecNumber evidence="1">3.1.4.-</ecNumber>
        </recommendedName>
    </domain>
    <domain>
        <recommendedName>
            <fullName evidence="1">Phosphatase</fullName>
            <ecNumber evidence="1">3.1.3.-</ecNumber>
        </recommendedName>
    </domain>
</protein>
<sequence length="410" mass="47134">MKVYLVGGAVRDRLLGIPVQEQDWVVVGATPEELLKRKYRQVGRDFPVFLHPETKEEYALARTERKSAPGYYGFICDFSESVTLEEDLARRDLTINAMAMDEQGNLIDPYQGQRDLEEKLLRHVSSAFAEDPVRVLRVARFASRFHHLGFRIANETRLLMYSMVKQGELAHLIPERVWQEWQKSLEEKNPEQFILSLRSCDALRVILPEINSLFGVPNPHQYHQEIDTGIHSLMTLRASSELSEEPLVRFAALVHDLGKASTPIQAWPKHHGHEEEGTKLIRALCARLRIPNDYRDLAVTVARAHLNIHRVCELRPNTIVKLLEQVDAFRRPQLFHKILIACQADAESCGKTVVYRQTQLWNEILSECVKVTPQTFIVQGYEGKAIKEAMHQSRVACVERIMTSWKSNEK</sequence>
<proteinExistence type="inferred from homology"/>
<feature type="chain" id="PRO_0000138983" description="Multifunctional CCA protein">
    <location>
        <begin position="1"/>
        <end position="410"/>
    </location>
</feature>
<feature type="domain" description="HD" evidence="1">
    <location>
        <begin position="228"/>
        <end position="329"/>
    </location>
</feature>
<feature type="binding site" evidence="1">
    <location>
        <position position="8"/>
    </location>
    <ligand>
        <name>ATP</name>
        <dbReference type="ChEBI" id="CHEBI:30616"/>
    </ligand>
</feature>
<feature type="binding site" evidence="1">
    <location>
        <position position="8"/>
    </location>
    <ligand>
        <name>CTP</name>
        <dbReference type="ChEBI" id="CHEBI:37563"/>
    </ligand>
</feature>
<feature type="binding site" evidence="1">
    <location>
        <position position="11"/>
    </location>
    <ligand>
        <name>ATP</name>
        <dbReference type="ChEBI" id="CHEBI:30616"/>
    </ligand>
</feature>
<feature type="binding site" evidence="1">
    <location>
        <position position="11"/>
    </location>
    <ligand>
        <name>CTP</name>
        <dbReference type="ChEBI" id="CHEBI:37563"/>
    </ligand>
</feature>
<feature type="binding site" evidence="1">
    <location>
        <position position="21"/>
    </location>
    <ligand>
        <name>Mg(2+)</name>
        <dbReference type="ChEBI" id="CHEBI:18420"/>
    </ligand>
</feature>
<feature type="binding site" evidence="1">
    <location>
        <position position="23"/>
    </location>
    <ligand>
        <name>Mg(2+)</name>
        <dbReference type="ChEBI" id="CHEBI:18420"/>
    </ligand>
</feature>
<feature type="binding site" evidence="1">
    <location>
        <position position="91"/>
    </location>
    <ligand>
        <name>ATP</name>
        <dbReference type="ChEBI" id="CHEBI:30616"/>
    </ligand>
</feature>
<feature type="binding site" evidence="1">
    <location>
        <position position="91"/>
    </location>
    <ligand>
        <name>CTP</name>
        <dbReference type="ChEBI" id="CHEBI:37563"/>
    </ligand>
</feature>
<feature type="binding site" evidence="1">
    <location>
        <position position="137"/>
    </location>
    <ligand>
        <name>ATP</name>
        <dbReference type="ChEBI" id="CHEBI:30616"/>
    </ligand>
</feature>
<feature type="binding site" evidence="1">
    <location>
        <position position="137"/>
    </location>
    <ligand>
        <name>CTP</name>
        <dbReference type="ChEBI" id="CHEBI:37563"/>
    </ligand>
</feature>
<feature type="binding site" evidence="1">
    <location>
        <position position="140"/>
    </location>
    <ligand>
        <name>ATP</name>
        <dbReference type="ChEBI" id="CHEBI:30616"/>
    </ligand>
</feature>
<feature type="binding site" evidence="1">
    <location>
        <position position="140"/>
    </location>
    <ligand>
        <name>CTP</name>
        <dbReference type="ChEBI" id="CHEBI:37563"/>
    </ligand>
</feature>
<dbReference type="EC" id="2.7.7.72" evidence="1"/>
<dbReference type="EC" id="3.1.3.-" evidence="1"/>
<dbReference type="EC" id="3.1.4.-" evidence="1"/>
<dbReference type="EMBL" id="CR628337">
    <property type="protein sequence ID" value="CAH16908.1"/>
    <property type="molecule type" value="Genomic_DNA"/>
</dbReference>
<dbReference type="RefSeq" id="WP_011216601.1">
    <property type="nucleotide sequence ID" value="NC_006369.1"/>
</dbReference>
<dbReference type="SMR" id="Q5WT58"/>
<dbReference type="KEGG" id="lpf:lpl2667"/>
<dbReference type="LegioList" id="lpl2667"/>
<dbReference type="HOGENOM" id="CLU_015961_1_1_6"/>
<dbReference type="Proteomes" id="UP000002517">
    <property type="component" value="Chromosome"/>
</dbReference>
<dbReference type="GO" id="GO:0005524">
    <property type="term" value="F:ATP binding"/>
    <property type="evidence" value="ECO:0007669"/>
    <property type="project" value="UniProtKB-UniRule"/>
</dbReference>
<dbReference type="GO" id="GO:0004810">
    <property type="term" value="F:CCA tRNA nucleotidyltransferase activity"/>
    <property type="evidence" value="ECO:0007669"/>
    <property type="project" value="UniProtKB-UniRule"/>
</dbReference>
<dbReference type="GO" id="GO:0004112">
    <property type="term" value="F:cyclic-nucleotide phosphodiesterase activity"/>
    <property type="evidence" value="ECO:0007669"/>
    <property type="project" value="UniProtKB-UniRule"/>
</dbReference>
<dbReference type="GO" id="GO:0000287">
    <property type="term" value="F:magnesium ion binding"/>
    <property type="evidence" value="ECO:0007669"/>
    <property type="project" value="UniProtKB-UniRule"/>
</dbReference>
<dbReference type="GO" id="GO:0016791">
    <property type="term" value="F:phosphatase activity"/>
    <property type="evidence" value="ECO:0007669"/>
    <property type="project" value="UniProtKB-UniRule"/>
</dbReference>
<dbReference type="GO" id="GO:0000049">
    <property type="term" value="F:tRNA binding"/>
    <property type="evidence" value="ECO:0007669"/>
    <property type="project" value="UniProtKB-UniRule"/>
</dbReference>
<dbReference type="GO" id="GO:0042245">
    <property type="term" value="P:RNA repair"/>
    <property type="evidence" value="ECO:0007669"/>
    <property type="project" value="UniProtKB-KW"/>
</dbReference>
<dbReference type="GO" id="GO:0001680">
    <property type="term" value="P:tRNA 3'-terminal CCA addition"/>
    <property type="evidence" value="ECO:0007669"/>
    <property type="project" value="UniProtKB-UniRule"/>
</dbReference>
<dbReference type="CDD" id="cd00077">
    <property type="entry name" value="HDc"/>
    <property type="match status" value="1"/>
</dbReference>
<dbReference type="CDD" id="cd05398">
    <property type="entry name" value="NT_ClassII-CCAase"/>
    <property type="match status" value="1"/>
</dbReference>
<dbReference type="Gene3D" id="3.30.460.10">
    <property type="entry name" value="Beta Polymerase, domain 2"/>
    <property type="match status" value="1"/>
</dbReference>
<dbReference type="Gene3D" id="1.10.3090.10">
    <property type="entry name" value="cca-adding enzyme, domain 2"/>
    <property type="match status" value="1"/>
</dbReference>
<dbReference type="HAMAP" id="MF_01261">
    <property type="entry name" value="CCA_bact_type1"/>
    <property type="match status" value="1"/>
</dbReference>
<dbReference type="HAMAP" id="MF_01262">
    <property type="entry name" value="CCA_bact_type2"/>
    <property type="match status" value="1"/>
</dbReference>
<dbReference type="InterPro" id="IPR012006">
    <property type="entry name" value="CCA_bact"/>
</dbReference>
<dbReference type="InterPro" id="IPR003607">
    <property type="entry name" value="HD/PDEase_dom"/>
</dbReference>
<dbReference type="InterPro" id="IPR006674">
    <property type="entry name" value="HD_domain"/>
</dbReference>
<dbReference type="InterPro" id="IPR043519">
    <property type="entry name" value="NT_sf"/>
</dbReference>
<dbReference type="InterPro" id="IPR002646">
    <property type="entry name" value="PolA_pol_head_dom"/>
</dbReference>
<dbReference type="InterPro" id="IPR032828">
    <property type="entry name" value="PolyA_RNA-bd"/>
</dbReference>
<dbReference type="InterPro" id="IPR050124">
    <property type="entry name" value="tRNA_CCA-adding_enzyme"/>
</dbReference>
<dbReference type="NCBIfam" id="NF008137">
    <property type="entry name" value="PRK10885.1"/>
    <property type="match status" value="1"/>
</dbReference>
<dbReference type="PANTHER" id="PTHR47545">
    <property type="entry name" value="MULTIFUNCTIONAL CCA PROTEIN"/>
    <property type="match status" value="1"/>
</dbReference>
<dbReference type="PANTHER" id="PTHR47545:SF1">
    <property type="entry name" value="MULTIFUNCTIONAL CCA PROTEIN"/>
    <property type="match status" value="1"/>
</dbReference>
<dbReference type="Pfam" id="PF01966">
    <property type="entry name" value="HD"/>
    <property type="match status" value="1"/>
</dbReference>
<dbReference type="Pfam" id="PF01743">
    <property type="entry name" value="PolyA_pol"/>
    <property type="match status" value="1"/>
</dbReference>
<dbReference type="Pfam" id="PF12627">
    <property type="entry name" value="PolyA_pol_RNAbd"/>
    <property type="match status" value="1"/>
</dbReference>
<dbReference type="PIRSF" id="PIRSF000813">
    <property type="entry name" value="CCA_bact"/>
    <property type="match status" value="1"/>
</dbReference>
<dbReference type="SUPFAM" id="SSF81301">
    <property type="entry name" value="Nucleotidyltransferase"/>
    <property type="match status" value="1"/>
</dbReference>
<dbReference type="SUPFAM" id="SSF81891">
    <property type="entry name" value="Poly A polymerase C-terminal region-like"/>
    <property type="match status" value="1"/>
</dbReference>
<dbReference type="PROSITE" id="PS51831">
    <property type="entry name" value="HD"/>
    <property type="match status" value="1"/>
</dbReference>
<gene>
    <name evidence="1" type="primary">cca</name>
    <name type="ordered locus">lpl2667</name>
</gene>